<name>INVO_SAGOE</name>
<accession>P24712</accession>
<feature type="chain" id="PRO_0000159744" description="Involucrin">
    <location>
        <begin position="1"/>
        <end position="493"/>
    </location>
</feature>
<feature type="region of interest" description="Disordered" evidence="2">
    <location>
        <begin position="1"/>
        <end position="47"/>
    </location>
</feature>
<feature type="region of interest" description="Disordered" evidence="2">
    <location>
        <begin position="60"/>
        <end position="123"/>
    </location>
</feature>
<feature type="region of interest" description="Disordered" evidence="2">
    <location>
        <begin position="139"/>
        <end position="493"/>
    </location>
</feature>
<feature type="compositionally biased region" description="Low complexity" evidence="2">
    <location>
        <begin position="76"/>
        <end position="89"/>
    </location>
</feature>
<feature type="compositionally biased region" description="Basic and acidic residues" evidence="2">
    <location>
        <begin position="90"/>
        <end position="116"/>
    </location>
</feature>
<feature type="compositionally biased region" description="Basic and acidic residues" evidence="2">
    <location>
        <begin position="139"/>
        <end position="151"/>
    </location>
</feature>
<feature type="compositionally biased region" description="Basic and acidic residues" evidence="2">
    <location>
        <begin position="161"/>
        <end position="174"/>
    </location>
</feature>
<feature type="compositionally biased region" description="Basic and acidic residues" evidence="2">
    <location>
        <begin position="184"/>
        <end position="193"/>
    </location>
</feature>
<feature type="compositionally biased region" description="Basic and acidic residues" evidence="2">
    <location>
        <begin position="201"/>
        <end position="213"/>
    </location>
</feature>
<feature type="compositionally biased region" description="Polar residues" evidence="2">
    <location>
        <begin position="228"/>
        <end position="240"/>
    </location>
</feature>
<feature type="compositionally biased region" description="Basic and acidic residues" evidence="2">
    <location>
        <begin position="250"/>
        <end position="270"/>
    </location>
</feature>
<feature type="compositionally biased region" description="Basic and acidic residues" evidence="2">
    <location>
        <begin position="282"/>
        <end position="360"/>
    </location>
</feature>
<feature type="compositionally biased region" description="Basic and acidic residues" evidence="2">
    <location>
        <begin position="372"/>
        <end position="386"/>
    </location>
</feature>
<feature type="compositionally biased region" description="Basic and acidic residues" evidence="2">
    <location>
        <begin position="411"/>
        <end position="431"/>
    </location>
</feature>
<feature type="compositionally biased region" description="Basic and acidic residues" evidence="2">
    <location>
        <begin position="439"/>
        <end position="450"/>
    </location>
</feature>
<feature type="compositionally biased region" description="Low complexity" evidence="2">
    <location>
        <begin position="473"/>
        <end position="493"/>
    </location>
</feature>
<keyword id="KW-0963">Cytoplasm</keyword>
<keyword id="KW-0417">Keratinization</keyword>
<keyword id="KW-0677">Repeat</keyword>
<dbReference type="EMBL" id="M67477">
    <property type="protein sequence ID" value="AAA36950.1"/>
    <property type="molecule type" value="Genomic_DNA"/>
</dbReference>
<dbReference type="PIR" id="A57783">
    <property type="entry name" value="A57783"/>
</dbReference>
<dbReference type="GO" id="GO:0001533">
    <property type="term" value="C:cornified envelope"/>
    <property type="evidence" value="ECO:0000250"/>
    <property type="project" value="UniProtKB"/>
</dbReference>
<dbReference type="GO" id="GO:0005737">
    <property type="term" value="C:cytoplasm"/>
    <property type="evidence" value="ECO:0007669"/>
    <property type="project" value="UniProtKB-SubCell"/>
</dbReference>
<dbReference type="GO" id="GO:0031424">
    <property type="term" value="P:keratinization"/>
    <property type="evidence" value="ECO:0007669"/>
    <property type="project" value="UniProtKB-KW"/>
</dbReference>
<dbReference type="GO" id="GO:0030216">
    <property type="term" value="P:keratinocyte differentiation"/>
    <property type="evidence" value="ECO:0000250"/>
    <property type="project" value="UniProtKB"/>
</dbReference>
<dbReference type="GO" id="GO:0018149">
    <property type="term" value="P:peptide cross-linking"/>
    <property type="evidence" value="ECO:0000250"/>
    <property type="project" value="UniProtKB"/>
</dbReference>
<dbReference type="GO" id="GO:0010224">
    <property type="term" value="P:response to UV-B"/>
    <property type="evidence" value="ECO:0000250"/>
    <property type="project" value="UniProtKB"/>
</dbReference>
<dbReference type="InterPro" id="IPR019743">
    <property type="entry name" value="Involucrin_CS"/>
</dbReference>
<dbReference type="InterPro" id="IPR019571">
    <property type="entry name" value="Involucrin_N"/>
</dbReference>
<dbReference type="InterPro" id="IPR000354">
    <property type="entry name" value="Involucrin_rpt"/>
</dbReference>
<dbReference type="Pfam" id="PF00904">
    <property type="entry name" value="Involucrin"/>
    <property type="match status" value="18"/>
</dbReference>
<dbReference type="Pfam" id="PF10583">
    <property type="entry name" value="Involucrin_N"/>
    <property type="match status" value="1"/>
</dbReference>
<dbReference type="PROSITE" id="PS00795">
    <property type="entry name" value="INVOLUCRIN"/>
    <property type="match status" value="1"/>
</dbReference>
<gene>
    <name type="primary">IVL</name>
</gene>
<organism>
    <name type="scientific">Saguinus oedipus</name>
    <name type="common">Cotton-top tamarin</name>
    <dbReference type="NCBI Taxonomy" id="9490"/>
    <lineage>
        <taxon>Eukaryota</taxon>
        <taxon>Metazoa</taxon>
        <taxon>Chordata</taxon>
        <taxon>Craniata</taxon>
        <taxon>Vertebrata</taxon>
        <taxon>Euteleostomi</taxon>
        <taxon>Mammalia</taxon>
        <taxon>Eutheria</taxon>
        <taxon>Euarchontoglires</taxon>
        <taxon>Primates</taxon>
        <taxon>Haplorrhini</taxon>
        <taxon>Platyrrhini</taxon>
        <taxon>Cebidae</taxon>
        <taxon>Callitrichinae</taxon>
        <taxon>Saguinus</taxon>
    </lineage>
</organism>
<comment type="function">
    <text>Part of the insoluble cornified cell envelope (CE) of stratified squamous epithelia.</text>
</comment>
<comment type="subunit">
    <text evidence="1">Directly or indirectly cross-linked to cornifelin (CNFN).</text>
</comment>
<comment type="subcellular location">
    <subcellularLocation>
        <location>Cytoplasm</location>
    </subcellularLocation>
    <text>Constituent of the scaffolding of the cornified envelope.</text>
</comment>
<comment type="tissue specificity">
    <text>Keratinocytes of epidermis and other stratified squamous epithelia.</text>
</comment>
<comment type="PTM">
    <text>Substrate of transglutaminase. Specific glutamines or lysines are cross-linked to keratins, desmoplakin and to inter involucrin molecules.</text>
</comment>
<comment type="similarity">
    <text evidence="3">Belongs to the involucrin family.</text>
</comment>
<sequence>MSQQHTLPVTLPAALSQKLLDTVPPPVNTQQEQRKQPAPLPPPCQKVPVELPVEVLSKHEEKHMTIVKGVPEQECEQQQPQEQELQQQHWEQDKEHQKAENPEQQLKQEKVQREKQQLQGQLEEEKKLLDQQLDQELAKRDEQLGTKKEQLLEFPEQQEGQLKHLEQEEGHLELPEQQEGQLKNLEHQEKPLELPEQQEGQLKHLEQQEKPLELPEQQEGQLKHLEQQEGQSELPEQQRGQPKYLEQEEGQLKHLEEQKGQLKHLEHEEGQLELPEQVGQPKHLEQLEKQLEHPEQQEGQLKHLEEEEGQVKHLGEQEEQLKHLEQQEEQLKHLEQQEGQLEHLEQQEGQLKHLEQHEGQLELPEQQVGQSKHLEQEEKQLEHPEQQEGQLKHLGKQKAQLELTEQVGQPKHLEQQEKQLEHPQQQEEQLKPQEQQEGQLKDLEQQERQLEQPVFASAPGQVQDIQQALPPKGEVLLPVEQQQQKQEVQGQHE</sequence>
<protein>
    <recommendedName>
        <fullName>Involucrin</fullName>
    </recommendedName>
</protein>
<evidence type="ECO:0000250" key="1"/>
<evidence type="ECO:0000256" key="2">
    <source>
        <dbReference type="SAM" id="MobiDB-lite"/>
    </source>
</evidence>
<evidence type="ECO:0000305" key="3"/>
<proteinExistence type="evidence at transcript level"/>
<reference key="1">
    <citation type="journal article" date="1991" name="Mol. Biol. Evol.">
        <title>The involucrin genes of the white-fronted capuchin and cottontop tamarin: the platyrrhine middle region.</title>
        <authorList>
            <person name="Phillips M."/>
            <person name="Rice R.H."/>
            <person name="Djian P."/>
            <person name="Green H."/>
        </authorList>
    </citation>
    <scope>NUCLEOTIDE SEQUENCE [GENOMIC DNA]</scope>
    <source>
        <tissue>Vaginal fibroblast</tissue>
    </source>
</reference>